<sequence>MSHNVEKITDAKVFKEKVQEGSGPVIVDCSATWCGPCKAISPVFQRLSTSEEFKNAKFYEIDVDELSEVAAELGVRAMPTFMFFKDGQKVNEVVGANPPALEAAIKAHVA</sequence>
<comment type="function">
    <text evidence="5 7">Participates in various redox reactions through the reversible oxidation of its active center dithiol to a disulfide and catalyzes dithiol-disulfide exchange reactions.</text>
</comment>
<comment type="allergen">
    <text evidence="5 6">Causes an allergic reaction in human (PubMed:17182577, PubMed:19032234). Recombinant protein binds to IgE in atopic eczema-suffering patients allergic to yeast M.sympodialis (PubMed:17182577). Recombinant protein binds to IgE in 50% of the 40 patients tested suffering from allergic bronchopulmonary aspergillosis (ABPA). Causes a positive skin reaction and induces proliferation of the human peripheral blood mononuclear cells in ABPA patients allergic to this protein (PubMed:19032234).</text>
</comment>
<comment type="similarity">
    <text evidence="2">Belongs to the thioredoxin family.</text>
</comment>
<feature type="chain" id="PRO_0000449239" description="Thioredoxin Asp f 29">
    <location>
        <begin position="1"/>
        <end position="110"/>
    </location>
</feature>
<feature type="domain" description="Thioredoxin" evidence="4">
    <location>
        <begin position="1"/>
        <end position="110"/>
    </location>
</feature>
<feature type="active site" description="Nucleophile" evidence="1">
    <location>
        <position position="34"/>
    </location>
</feature>
<feature type="active site" description="Nucleophile" evidence="1">
    <location>
        <position position="37"/>
    </location>
</feature>
<feature type="site" description="Deprotonates C-terminal active site Cys" evidence="1">
    <location>
        <position position="28"/>
    </location>
</feature>
<feature type="site" description="Contributes to redox potential value" evidence="1">
    <location>
        <position position="35"/>
    </location>
</feature>
<feature type="site" description="Contributes to redox potential value" evidence="1">
    <location>
        <position position="36"/>
    </location>
</feature>
<feature type="disulfide bond" description="Redox-active" evidence="3 4">
    <location>
        <begin position="34"/>
        <end position="37"/>
    </location>
</feature>
<protein>
    <recommendedName>
        <fullName evidence="10">Thioredoxin Asp f 29</fullName>
        <shortName evidence="8 9">Trx</shortName>
    </recommendedName>
    <allergenName evidence="8 9">Asp f 29</allergenName>
</protein>
<organism evidence="11">
    <name type="scientific">Aspergillus fumigatus</name>
    <name type="common">Neosartorya fumigata</name>
    <dbReference type="NCBI Taxonomy" id="746128"/>
    <lineage>
        <taxon>Eukaryota</taxon>
        <taxon>Fungi</taxon>
        <taxon>Dikarya</taxon>
        <taxon>Ascomycota</taxon>
        <taxon>Pezizomycotina</taxon>
        <taxon>Eurotiomycetes</taxon>
        <taxon>Eurotiomycetidae</taxon>
        <taxon>Eurotiales</taxon>
        <taxon>Aspergillaceae</taxon>
        <taxon>Aspergillus</taxon>
        <taxon>Aspergillus subgen. Fumigati</taxon>
    </lineage>
</organism>
<evidence type="ECO:0000250" key="1">
    <source>
        <dbReference type="UniProtKB" id="P10599"/>
    </source>
</evidence>
<evidence type="ECO:0000255" key="2">
    <source>
        <dbReference type="PIRNR" id="PIRNR000077"/>
    </source>
</evidence>
<evidence type="ECO:0000255" key="3">
    <source>
        <dbReference type="PIRSR" id="PIRSR000077-4"/>
    </source>
</evidence>
<evidence type="ECO:0000255" key="4">
    <source>
        <dbReference type="PROSITE-ProRule" id="PRU00691"/>
    </source>
</evidence>
<evidence type="ECO:0000269" key="5">
    <source>
    </source>
</evidence>
<evidence type="ECO:0000269" key="6">
    <source>
    </source>
</evidence>
<evidence type="ECO:0000269" key="7">
    <source>
    </source>
</evidence>
<evidence type="ECO:0000303" key="8">
    <source>
    </source>
</evidence>
<evidence type="ECO:0000303" key="9">
    <source>
    </source>
</evidence>
<evidence type="ECO:0000305" key="10"/>
<evidence type="ECO:0000312" key="11">
    <source>
        <dbReference type="EMBL" id="CAI78450.1"/>
    </source>
</evidence>
<evidence type="ECO:0000312" key="12">
    <source>
        <dbReference type="EMBL" id="OXN30268.1"/>
    </source>
</evidence>
<accession>Q1RQJ0</accession>
<proteinExistence type="evidence at protein level"/>
<dbReference type="EMBL" id="AJ937745">
    <property type="protein sequence ID" value="CAI78450.1"/>
    <property type="molecule type" value="mRNA"/>
</dbReference>
<dbReference type="EMBL" id="NKHT01000003">
    <property type="protein sequence ID" value="OXN30268.1"/>
    <property type="molecule type" value="Genomic_DNA"/>
</dbReference>
<dbReference type="SMR" id="Q1RQJ0"/>
<dbReference type="Allergome" id="2679">
    <property type="allergen name" value="Asp f 29"/>
</dbReference>
<dbReference type="OMA" id="HIHYVTD"/>
<dbReference type="GO" id="GO:0015035">
    <property type="term" value="F:protein-disulfide reductase activity"/>
    <property type="evidence" value="ECO:0007669"/>
    <property type="project" value="InterPro"/>
</dbReference>
<dbReference type="CDD" id="cd02947">
    <property type="entry name" value="TRX_family"/>
    <property type="match status" value="1"/>
</dbReference>
<dbReference type="FunFam" id="3.40.30.10:FF:000245">
    <property type="entry name" value="Thioredoxin"/>
    <property type="match status" value="1"/>
</dbReference>
<dbReference type="Gene3D" id="3.40.30.10">
    <property type="entry name" value="Glutaredoxin"/>
    <property type="match status" value="1"/>
</dbReference>
<dbReference type="InterPro" id="IPR005746">
    <property type="entry name" value="Thioredoxin"/>
</dbReference>
<dbReference type="InterPro" id="IPR036249">
    <property type="entry name" value="Thioredoxin-like_sf"/>
</dbReference>
<dbReference type="InterPro" id="IPR017937">
    <property type="entry name" value="Thioredoxin_CS"/>
</dbReference>
<dbReference type="InterPro" id="IPR013766">
    <property type="entry name" value="Thioredoxin_domain"/>
</dbReference>
<dbReference type="NCBIfam" id="TIGR01068">
    <property type="entry name" value="thioredoxin"/>
    <property type="match status" value="1"/>
</dbReference>
<dbReference type="PANTHER" id="PTHR46115">
    <property type="entry name" value="THIOREDOXIN-LIKE PROTEIN 1"/>
    <property type="match status" value="1"/>
</dbReference>
<dbReference type="Pfam" id="PF00085">
    <property type="entry name" value="Thioredoxin"/>
    <property type="match status" value="1"/>
</dbReference>
<dbReference type="PIRSF" id="PIRSF000077">
    <property type="entry name" value="Thioredoxin"/>
    <property type="match status" value="1"/>
</dbReference>
<dbReference type="PRINTS" id="PR00421">
    <property type="entry name" value="THIOREDOXIN"/>
</dbReference>
<dbReference type="SUPFAM" id="SSF52833">
    <property type="entry name" value="Thioredoxin-like"/>
    <property type="match status" value="1"/>
</dbReference>
<dbReference type="PROSITE" id="PS00194">
    <property type="entry name" value="THIOREDOXIN_1"/>
    <property type="match status" value="1"/>
</dbReference>
<dbReference type="PROSITE" id="PS51352">
    <property type="entry name" value="THIOREDOXIN_2"/>
    <property type="match status" value="1"/>
</dbReference>
<keyword id="KW-0020">Allergen</keyword>
<keyword id="KW-1015">Disulfide bond</keyword>
<keyword id="KW-0676">Redox-active center</keyword>
<reference evidence="11" key="1">
    <citation type="journal article" date="2007" name="J. Immunol.">
        <title>Cross-reactivity and 1.4-A crystal structure of Malassezia sympodialis thioredoxin (Mala s 13), a member of a new pan-allergen family.</title>
        <authorList>
            <person name="Limacher A."/>
            <person name="Glaser A.G."/>
            <person name="Meier C."/>
            <person name="Schmid-Grendelmeier P."/>
            <person name="Zeller S."/>
            <person name="Scapozza L."/>
            <person name="Crameri R."/>
        </authorList>
    </citation>
    <scope>NUCLEOTIDE SEQUENCE [MRNA]</scope>
    <scope>FUNCTION</scope>
    <scope>ALLERGEN</scope>
    <source>
        <strain evidence="11">ATCC 42202 / AF-102 / Ag 507</strain>
    </source>
</reference>
<reference evidence="12" key="2">
    <citation type="journal article" date="2020" name="J. Antimicrob. Chemother.">
        <title>Prevalence and mechanisms of azole resistance in clinical isolates of Aspergillus section Fumigati species in a Canadian tertiary care centre, 2000 to 2013.</title>
        <authorList>
            <person name="Parent-Michaud M."/>
            <person name="Dufresne P.J."/>
            <person name="Fournier E."/>
            <person name="Folch B."/>
            <person name="Martineau C."/>
            <person name="Moreira S."/>
            <person name="Doucet N."/>
            <person name="De Repentigny L."/>
            <person name="Dufresne S.F."/>
        </authorList>
    </citation>
    <scope>NUCLEOTIDE SEQUENCE [LARGE SCALE GENOMIC DNA]</scope>
    <source>
        <strain evidence="12">HMR AF 270</strain>
    </source>
</reference>
<reference key="3">
    <citation type="journal article" date="2008" name="Allergy">
        <title>Auto- and cross-reactivity to thioredoxin allergens in allergic bronchopulmonary aspergillosis.</title>
        <authorList>
            <person name="Glaser A.G."/>
            <person name="Menz G."/>
            <person name="Kirsch A.I."/>
            <person name="Zeller S."/>
            <person name="Crameri R."/>
            <person name="Rhyner C."/>
        </authorList>
    </citation>
    <scope>FUNCTION</scope>
    <scope>ALLERGEN</scope>
    <scope>3D-STRUCTURE MODELING</scope>
</reference>
<name>THX29_ASPFM</name>
<gene>
    <name evidence="12" type="ORF">CDV57_00134</name>
</gene>